<dbReference type="EC" id="6.1.1.7" evidence="1"/>
<dbReference type="EMBL" id="AE017198">
    <property type="protein sequence ID" value="AAS08466.1"/>
    <property type="molecule type" value="Genomic_DNA"/>
</dbReference>
<dbReference type="RefSeq" id="WP_011161609.1">
    <property type="nucleotide sequence ID" value="NC_005362.1"/>
</dbReference>
<dbReference type="SMR" id="P61702"/>
<dbReference type="GeneID" id="83569902"/>
<dbReference type="KEGG" id="ljo:LJ_0474"/>
<dbReference type="PATRIC" id="fig|257314.6.peg.501"/>
<dbReference type="eggNOG" id="COG0013">
    <property type="taxonomic scope" value="Bacteria"/>
</dbReference>
<dbReference type="HOGENOM" id="CLU_004485_1_1_9"/>
<dbReference type="Proteomes" id="UP000000581">
    <property type="component" value="Chromosome"/>
</dbReference>
<dbReference type="GO" id="GO:0005829">
    <property type="term" value="C:cytosol"/>
    <property type="evidence" value="ECO:0007669"/>
    <property type="project" value="TreeGrafter"/>
</dbReference>
<dbReference type="GO" id="GO:0004813">
    <property type="term" value="F:alanine-tRNA ligase activity"/>
    <property type="evidence" value="ECO:0007669"/>
    <property type="project" value="UniProtKB-UniRule"/>
</dbReference>
<dbReference type="GO" id="GO:0002161">
    <property type="term" value="F:aminoacyl-tRNA deacylase activity"/>
    <property type="evidence" value="ECO:0007669"/>
    <property type="project" value="TreeGrafter"/>
</dbReference>
<dbReference type="GO" id="GO:0005524">
    <property type="term" value="F:ATP binding"/>
    <property type="evidence" value="ECO:0007669"/>
    <property type="project" value="UniProtKB-UniRule"/>
</dbReference>
<dbReference type="GO" id="GO:0140096">
    <property type="term" value="F:catalytic activity, acting on a protein"/>
    <property type="evidence" value="ECO:0007669"/>
    <property type="project" value="UniProtKB-ARBA"/>
</dbReference>
<dbReference type="GO" id="GO:0016740">
    <property type="term" value="F:transferase activity"/>
    <property type="evidence" value="ECO:0007669"/>
    <property type="project" value="UniProtKB-ARBA"/>
</dbReference>
<dbReference type="GO" id="GO:0000049">
    <property type="term" value="F:tRNA binding"/>
    <property type="evidence" value="ECO:0007669"/>
    <property type="project" value="UniProtKB-KW"/>
</dbReference>
<dbReference type="GO" id="GO:0008270">
    <property type="term" value="F:zinc ion binding"/>
    <property type="evidence" value="ECO:0007669"/>
    <property type="project" value="UniProtKB-UniRule"/>
</dbReference>
<dbReference type="GO" id="GO:0006419">
    <property type="term" value="P:alanyl-tRNA aminoacylation"/>
    <property type="evidence" value="ECO:0007669"/>
    <property type="project" value="UniProtKB-UniRule"/>
</dbReference>
<dbReference type="CDD" id="cd00673">
    <property type="entry name" value="AlaRS_core"/>
    <property type="match status" value="1"/>
</dbReference>
<dbReference type="FunFam" id="3.10.310.40:FF:000001">
    <property type="entry name" value="Alanine--tRNA ligase"/>
    <property type="match status" value="1"/>
</dbReference>
<dbReference type="FunFam" id="3.30.54.20:FF:000001">
    <property type="entry name" value="Alanine--tRNA ligase"/>
    <property type="match status" value="1"/>
</dbReference>
<dbReference type="FunFam" id="3.30.930.10:FF:000046">
    <property type="entry name" value="Alanine--tRNA ligase"/>
    <property type="match status" value="1"/>
</dbReference>
<dbReference type="FunFam" id="3.30.980.10:FF:000004">
    <property type="entry name" value="Alanine--tRNA ligase, cytoplasmic"/>
    <property type="match status" value="1"/>
</dbReference>
<dbReference type="Gene3D" id="2.40.30.130">
    <property type="match status" value="1"/>
</dbReference>
<dbReference type="Gene3D" id="3.10.310.40">
    <property type="match status" value="1"/>
</dbReference>
<dbReference type="Gene3D" id="3.30.54.20">
    <property type="match status" value="1"/>
</dbReference>
<dbReference type="Gene3D" id="6.10.250.550">
    <property type="match status" value="1"/>
</dbReference>
<dbReference type="Gene3D" id="3.30.930.10">
    <property type="entry name" value="Bira Bifunctional Protein, Domain 2"/>
    <property type="match status" value="1"/>
</dbReference>
<dbReference type="Gene3D" id="3.30.980.10">
    <property type="entry name" value="Threonyl-trna Synthetase, Chain A, domain 2"/>
    <property type="match status" value="1"/>
</dbReference>
<dbReference type="HAMAP" id="MF_00036_B">
    <property type="entry name" value="Ala_tRNA_synth_B"/>
    <property type="match status" value="1"/>
</dbReference>
<dbReference type="InterPro" id="IPR045864">
    <property type="entry name" value="aa-tRNA-synth_II/BPL/LPL"/>
</dbReference>
<dbReference type="InterPro" id="IPR002318">
    <property type="entry name" value="Ala-tRNA-lgiase_IIc"/>
</dbReference>
<dbReference type="InterPro" id="IPR018162">
    <property type="entry name" value="Ala-tRNA-ligase_IIc_anticod-bd"/>
</dbReference>
<dbReference type="InterPro" id="IPR018165">
    <property type="entry name" value="Ala-tRNA-synth_IIc_core"/>
</dbReference>
<dbReference type="InterPro" id="IPR018164">
    <property type="entry name" value="Ala-tRNA-synth_IIc_N"/>
</dbReference>
<dbReference type="InterPro" id="IPR050058">
    <property type="entry name" value="Ala-tRNA_ligase"/>
</dbReference>
<dbReference type="InterPro" id="IPR023033">
    <property type="entry name" value="Ala_tRNA_ligase_euk/bac"/>
</dbReference>
<dbReference type="InterPro" id="IPR003156">
    <property type="entry name" value="DHHA1_dom"/>
</dbReference>
<dbReference type="InterPro" id="IPR018163">
    <property type="entry name" value="Thr/Ala-tRNA-synth_IIc_edit"/>
</dbReference>
<dbReference type="InterPro" id="IPR009000">
    <property type="entry name" value="Transl_B-barrel_sf"/>
</dbReference>
<dbReference type="InterPro" id="IPR012947">
    <property type="entry name" value="tRNA_SAD"/>
</dbReference>
<dbReference type="NCBIfam" id="TIGR00344">
    <property type="entry name" value="alaS"/>
    <property type="match status" value="1"/>
</dbReference>
<dbReference type="PANTHER" id="PTHR11777:SF9">
    <property type="entry name" value="ALANINE--TRNA LIGASE, CYTOPLASMIC"/>
    <property type="match status" value="1"/>
</dbReference>
<dbReference type="PANTHER" id="PTHR11777">
    <property type="entry name" value="ALANYL-TRNA SYNTHETASE"/>
    <property type="match status" value="1"/>
</dbReference>
<dbReference type="Pfam" id="PF02272">
    <property type="entry name" value="DHHA1"/>
    <property type="match status" value="1"/>
</dbReference>
<dbReference type="Pfam" id="PF01411">
    <property type="entry name" value="tRNA-synt_2c"/>
    <property type="match status" value="1"/>
</dbReference>
<dbReference type="Pfam" id="PF07973">
    <property type="entry name" value="tRNA_SAD"/>
    <property type="match status" value="1"/>
</dbReference>
<dbReference type="PRINTS" id="PR00980">
    <property type="entry name" value="TRNASYNTHALA"/>
</dbReference>
<dbReference type="SMART" id="SM00863">
    <property type="entry name" value="tRNA_SAD"/>
    <property type="match status" value="1"/>
</dbReference>
<dbReference type="SUPFAM" id="SSF55681">
    <property type="entry name" value="Class II aaRS and biotin synthetases"/>
    <property type="match status" value="1"/>
</dbReference>
<dbReference type="SUPFAM" id="SSF101353">
    <property type="entry name" value="Putative anticodon-binding domain of alanyl-tRNA synthetase (AlaRS)"/>
    <property type="match status" value="1"/>
</dbReference>
<dbReference type="SUPFAM" id="SSF55186">
    <property type="entry name" value="ThrRS/AlaRS common domain"/>
    <property type="match status" value="1"/>
</dbReference>
<dbReference type="SUPFAM" id="SSF50447">
    <property type="entry name" value="Translation proteins"/>
    <property type="match status" value="1"/>
</dbReference>
<dbReference type="PROSITE" id="PS50860">
    <property type="entry name" value="AA_TRNA_LIGASE_II_ALA"/>
    <property type="match status" value="1"/>
</dbReference>
<proteinExistence type="inferred from homology"/>
<name>SYA_LACJO</name>
<keyword id="KW-0030">Aminoacyl-tRNA synthetase</keyword>
<keyword id="KW-0067">ATP-binding</keyword>
<keyword id="KW-0963">Cytoplasm</keyword>
<keyword id="KW-0436">Ligase</keyword>
<keyword id="KW-0479">Metal-binding</keyword>
<keyword id="KW-0547">Nucleotide-binding</keyword>
<keyword id="KW-0648">Protein biosynthesis</keyword>
<keyword id="KW-0694">RNA-binding</keyword>
<keyword id="KW-0820">tRNA-binding</keyword>
<keyword id="KW-0862">Zinc</keyword>
<accession>P61702</accession>
<feature type="chain" id="PRO_0000075129" description="Alanine--tRNA ligase">
    <location>
        <begin position="1"/>
        <end position="882"/>
    </location>
</feature>
<feature type="binding site" evidence="1">
    <location>
        <position position="568"/>
    </location>
    <ligand>
        <name>Zn(2+)</name>
        <dbReference type="ChEBI" id="CHEBI:29105"/>
    </ligand>
</feature>
<feature type="binding site" evidence="1">
    <location>
        <position position="572"/>
    </location>
    <ligand>
        <name>Zn(2+)</name>
        <dbReference type="ChEBI" id="CHEBI:29105"/>
    </ligand>
</feature>
<feature type="binding site" evidence="1">
    <location>
        <position position="670"/>
    </location>
    <ligand>
        <name>Zn(2+)</name>
        <dbReference type="ChEBI" id="CHEBI:29105"/>
    </ligand>
</feature>
<feature type="binding site" evidence="1">
    <location>
        <position position="674"/>
    </location>
    <ligand>
        <name>Zn(2+)</name>
        <dbReference type="ChEBI" id="CHEBI:29105"/>
    </ligand>
</feature>
<comment type="function">
    <text evidence="1">Catalyzes the attachment of alanine to tRNA(Ala) in a two-step reaction: alanine is first activated by ATP to form Ala-AMP and then transferred to the acceptor end of tRNA(Ala). Also edits incorrectly charged Ser-tRNA(Ala) and Gly-tRNA(Ala) via its editing domain.</text>
</comment>
<comment type="catalytic activity">
    <reaction evidence="1">
        <text>tRNA(Ala) + L-alanine + ATP = L-alanyl-tRNA(Ala) + AMP + diphosphate</text>
        <dbReference type="Rhea" id="RHEA:12540"/>
        <dbReference type="Rhea" id="RHEA-COMP:9657"/>
        <dbReference type="Rhea" id="RHEA-COMP:9923"/>
        <dbReference type="ChEBI" id="CHEBI:30616"/>
        <dbReference type="ChEBI" id="CHEBI:33019"/>
        <dbReference type="ChEBI" id="CHEBI:57972"/>
        <dbReference type="ChEBI" id="CHEBI:78442"/>
        <dbReference type="ChEBI" id="CHEBI:78497"/>
        <dbReference type="ChEBI" id="CHEBI:456215"/>
        <dbReference type="EC" id="6.1.1.7"/>
    </reaction>
</comment>
<comment type="cofactor">
    <cofactor evidence="1">
        <name>Zn(2+)</name>
        <dbReference type="ChEBI" id="CHEBI:29105"/>
    </cofactor>
    <text evidence="1">Binds 1 zinc ion per subunit.</text>
</comment>
<comment type="subcellular location">
    <subcellularLocation>
        <location evidence="1">Cytoplasm</location>
    </subcellularLocation>
</comment>
<comment type="domain">
    <text evidence="1">Consists of three domains; the N-terminal catalytic domain, the editing domain and the C-terminal C-Ala domain. The editing domain removes incorrectly charged amino acids, while the C-Ala domain, along with tRNA(Ala), serves as a bridge to cooperatively bring together the editing and aminoacylation centers thus stimulating deacylation of misacylated tRNAs.</text>
</comment>
<comment type="similarity">
    <text evidence="1">Belongs to the class-II aminoacyl-tRNA synthetase family.</text>
</comment>
<sequence length="882" mass="98403">MKQLTSSQVRQMFLDFFKEHGHMVMQSASLIPQDDPTLLWINSGVATMKKYFDGSVVPKNHRITSSQKSIRTNDIENVGKTARHQTFFEMLGNFSVGDYFKKEVIPWAWEFLTSPKWLGLDPDKLYVTVYPKDTEAYHMWHDVVGLPEDHIVKLEDNFWDIGEGPCGPDSEIFYDRGQENNDVAEDDPENFPGGENARYLEIWNIVFSQFNHLPNGKYVDQPHKNIDTGMGLERVVSIIQDAPTNFETDLFMPIIKETEKLSDGKKYAANKEDDVAFKIIADHVRAVSFAIADGALPSNSGRGYVLRRLIRRADLNGQRLGIKGAFLYKLVPVVGEIMKSHYPEVVDQQAFIQKVIKNEEERFQVTLSSGLNLLDNIIAEAKKSDDKTISGKDAFKLFDTYGFPYELTFEAAQDAGLKIDKKGFDEEMKAQKERARKARGNLQSMGSQDVTLMNIKDKSEFEYGTLEEKHAKLIDIVVDDKLVDKADGEHATLIFDKTPFYAERGGQVADHGEILNQNGELVARVTDVQHAPNDQNLHFVDVILPLEKGQEYVLKVDQKRRRGLKHNHTATHLLHAALREVLGTHTHQAGSLVEPDYLRFDFTSLEPMTKKEIASVEKLVNEKIWEEIPVKTTVTDPDTGLKMGALALFGEKYGDTVRVVQIDDFSTEFCGGTHCENTDQIGMLKIVSESAVGAGTRRIIAVTGPEAYKYVTDRDEILKEVQDEVKATKAEDVVNKISSIEDDLRASQKEAEQLKAQINKAKAGDLFNDIKQVKDLTVIAAQADVEGMNDLRELADNWKSSNKSDVLVLAAEVNGKANMVISLDDKAIKAGLKAGDLIKTAAPIFGGGGGGRPNMAQAGGKNPAGLKDAIAKVLQEVEEKQN</sequence>
<protein>
    <recommendedName>
        <fullName evidence="1">Alanine--tRNA ligase</fullName>
        <ecNumber evidence="1">6.1.1.7</ecNumber>
    </recommendedName>
    <alternativeName>
        <fullName evidence="1">Alanyl-tRNA synthetase</fullName>
        <shortName evidence="1">AlaRS</shortName>
    </alternativeName>
</protein>
<organism>
    <name type="scientific">Lactobacillus johnsonii (strain CNCM I-12250 / La1 / NCC 533)</name>
    <dbReference type="NCBI Taxonomy" id="257314"/>
    <lineage>
        <taxon>Bacteria</taxon>
        <taxon>Bacillati</taxon>
        <taxon>Bacillota</taxon>
        <taxon>Bacilli</taxon>
        <taxon>Lactobacillales</taxon>
        <taxon>Lactobacillaceae</taxon>
        <taxon>Lactobacillus</taxon>
    </lineage>
</organism>
<reference key="1">
    <citation type="journal article" date="2004" name="Proc. Natl. Acad. Sci. U.S.A.">
        <title>The genome sequence of the probiotic intestinal bacterium Lactobacillus johnsonii NCC 533.</title>
        <authorList>
            <person name="Pridmore R.D."/>
            <person name="Berger B."/>
            <person name="Desiere F."/>
            <person name="Vilanova D."/>
            <person name="Barretto C."/>
            <person name="Pittet A.-C."/>
            <person name="Zwahlen M.-C."/>
            <person name="Rouvet M."/>
            <person name="Altermann E."/>
            <person name="Barrangou R."/>
            <person name="Mollet B."/>
            <person name="Mercenier A."/>
            <person name="Klaenhammer T."/>
            <person name="Arigoni F."/>
            <person name="Schell M.A."/>
        </authorList>
    </citation>
    <scope>NUCLEOTIDE SEQUENCE [LARGE SCALE GENOMIC DNA]</scope>
    <source>
        <strain>CNCM I-1225 / La1 / NCC 533</strain>
    </source>
</reference>
<evidence type="ECO:0000255" key="1">
    <source>
        <dbReference type="HAMAP-Rule" id="MF_00036"/>
    </source>
</evidence>
<gene>
    <name evidence="1" type="primary">alaS</name>
    <name type="ordered locus">LJ_0474</name>
</gene>